<feature type="chain" id="PRO_1000015066" description="Small ribosomal subunit protein uS10">
    <location>
        <begin position="1"/>
        <end position="101"/>
    </location>
</feature>
<protein>
    <recommendedName>
        <fullName evidence="1">Small ribosomal subunit protein uS10</fullName>
    </recommendedName>
    <alternativeName>
        <fullName evidence="2">30S ribosomal protein S10</fullName>
    </alternativeName>
</protein>
<proteinExistence type="inferred from homology"/>
<accession>A1T4N8</accession>
<evidence type="ECO:0000255" key="1">
    <source>
        <dbReference type="HAMAP-Rule" id="MF_00508"/>
    </source>
</evidence>
<evidence type="ECO:0000305" key="2"/>
<dbReference type="EMBL" id="CP000511">
    <property type="protein sequence ID" value="ABM12138.1"/>
    <property type="molecule type" value="Genomic_DNA"/>
</dbReference>
<dbReference type="RefSeq" id="WP_003883485.1">
    <property type="nucleotide sequence ID" value="NZ_JACKSD010000069.1"/>
</dbReference>
<dbReference type="SMR" id="A1T4N8"/>
<dbReference type="STRING" id="350058.Mvan_1304"/>
<dbReference type="GeneID" id="98800347"/>
<dbReference type="KEGG" id="mva:Mvan_1304"/>
<dbReference type="eggNOG" id="COG0051">
    <property type="taxonomic scope" value="Bacteria"/>
</dbReference>
<dbReference type="HOGENOM" id="CLU_122625_1_3_11"/>
<dbReference type="Proteomes" id="UP000009159">
    <property type="component" value="Chromosome"/>
</dbReference>
<dbReference type="GO" id="GO:1990904">
    <property type="term" value="C:ribonucleoprotein complex"/>
    <property type="evidence" value="ECO:0007669"/>
    <property type="project" value="UniProtKB-KW"/>
</dbReference>
<dbReference type="GO" id="GO:0005840">
    <property type="term" value="C:ribosome"/>
    <property type="evidence" value="ECO:0007669"/>
    <property type="project" value="UniProtKB-KW"/>
</dbReference>
<dbReference type="GO" id="GO:0003735">
    <property type="term" value="F:structural constituent of ribosome"/>
    <property type="evidence" value="ECO:0007669"/>
    <property type="project" value="InterPro"/>
</dbReference>
<dbReference type="GO" id="GO:0000049">
    <property type="term" value="F:tRNA binding"/>
    <property type="evidence" value="ECO:0007669"/>
    <property type="project" value="UniProtKB-UniRule"/>
</dbReference>
<dbReference type="GO" id="GO:0006412">
    <property type="term" value="P:translation"/>
    <property type="evidence" value="ECO:0007669"/>
    <property type="project" value="UniProtKB-UniRule"/>
</dbReference>
<dbReference type="FunFam" id="3.30.70.600:FF:000001">
    <property type="entry name" value="30S ribosomal protein S10"/>
    <property type="match status" value="1"/>
</dbReference>
<dbReference type="Gene3D" id="3.30.70.600">
    <property type="entry name" value="Ribosomal protein S10 domain"/>
    <property type="match status" value="1"/>
</dbReference>
<dbReference type="HAMAP" id="MF_00508">
    <property type="entry name" value="Ribosomal_uS10"/>
    <property type="match status" value="1"/>
</dbReference>
<dbReference type="InterPro" id="IPR001848">
    <property type="entry name" value="Ribosomal_uS10"/>
</dbReference>
<dbReference type="InterPro" id="IPR018268">
    <property type="entry name" value="Ribosomal_uS10_CS"/>
</dbReference>
<dbReference type="InterPro" id="IPR027486">
    <property type="entry name" value="Ribosomal_uS10_dom"/>
</dbReference>
<dbReference type="InterPro" id="IPR036838">
    <property type="entry name" value="Ribosomal_uS10_dom_sf"/>
</dbReference>
<dbReference type="NCBIfam" id="NF001861">
    <property type="entry name" value="PRK00596.1"/>
    <property type="match status" value="1"/>
</dbReference>
<dbReference type="NCBIfam" id="TIGR01049">
    <property type="entry name" value="rpsJ_bact"/>
    <property type="match status" value="1"/>
</dbReference>
<dbReference type="PANTHER" id="PTHR11700">
    <property type="entry name" value="30S RIBOSOMAL PROTEIN S10 FAMILY MEMBER"/>
    <property type="match status" value="1"/>
</dbReference>
<dbReference type="Pfam" id="PF00338">
    <property type="entry name" value="Ribosomal_S10"/>
    <property type="match status" value="1"/>
</dbReference>
<dbReference type="PRINTS" id="PR00971">
    <property type="entry name" value="RIBOSOMALS10"/>
</dbReference>
<dbReference type="SMART" id="SM01403">
    <property type="entry name" value="Ribosomal_S10"/>
    <property type="match status" value="1"/>
</dbReference>
<dbReference type="SUPFAM" id="SSF54999">
    <property type="entry name" value="Ribosomal protein S10"/>
    <property type="match status" value="1"/>
</dbReference>
<dbReference type="PROSITE" id="PS00361">
    <property type="entry name" value="RIBOSOMAL_S10"/>
    <property type="match status" value="1"/>
</dbReference>
<comment type="function">
    <text evidence="1">Involved in the binding of tRNA to the ribosomes.</text>
</comment>
<comment type="subunit">
    <text evidence="1">Part of the 30S ribosomal subunit.</text>
</comment>
<comment type="similarity">
    <text evidence="1">Belongs to the universal ribosomal protein uS10 family.</text>
</comment>
<gene>
    <name evidence="1" type="primary">rpsJ</name>
    <name type="ordered locus">Mvan_1304</name>
</gene>
<organism>
    <name type="scientific">Mycolicibacterium vanbaalenii (strain DSM 7251 / JCM 13017 / BCRC 16820 / KCTC 9966 / NRRL B-24157 / PYR-1)</name>
    <name type="common">Mycobacterium vanbaalenii</name>
    <dbReference type="NCBI Taxonomy" id="350058"/>
    <lineage>
        <taxon>Bacteria</taxon>
        <taxon>Bacillati</taxon>
        <taxon>Actinomycetota</taxon>
        <taxon>Actinomycetes</taxon>
        <taxon>Mycobacteriales</taxon>
        <taxon>Mycobacteriaceae</taxon>
        <taxon>Mycolicibacterium</taxon>
    </lineage>
</organism>
<sequence length="101" mass="11433">MAGQKIRIRLKAYDHEAIDASARKIVETVTRTGASVVGPVPLPTEKNVYCVIRSPHKYKDSREHFEMRTHKRLIDILDPTPKTVDALMRIDLPASVDVNIQ</sequence>
<keyword id="KW-0687">Ribonucleoprotein</keyword>
<keyword id="KW-0689">Ribosomal protein</keyword>
<name>RS10_MYCVP</name>
<reference key="1">
    <citation type="submission" date="2006-12" db="EMBL/GenBank/DDBJ databases">
        <title>Complete sequence of Mycobacterium vanbaalenii PYR-1.</title>
        <authorList>
            <consortium name="US DOE Joint Genome Institute"/>
            <person name="Copeland A."/>
            <person name="Lucas S."/>
            <person name="Lapidus A."/>
            <person name="Barry K."/>
            <person name="Detter J.C."/>
            <person name="Glavina del Rio T."/>
            <person name="Hammon N."/>
            <person name="Israni S."/>
            <person name="Dalin E."/>
            <person name="Tice H."/>
            <person name="Pitluck S."/>
            <person name="Singan V."/>
            <person name="Schmutz J."/>
            <person name="Larimer F."/>
            <person name="Land M."/>
            <person name="Hauser L."/>
            <person name="Kyrpides N."/>
            <person name="Anderson I.J."/>
            <person name="Miller C."/>
            <person name="Richardson P."/>
        </authorList>
    </citation>
    <scope>NUCLEOTIDE SEQUENCE [LARGE SCALE GENOMIC DNA]</scope>
    <source>
        <strain>DSM 7251 / JCM 13017 / BCRC 16820 / KCTC 9966 / NRRL B-24157 / PYR-1</strain>
    </source>
</reference>